<name>PHO11_ARATH</name>
<organism>
    <name type="scientific">Arabidopsis thaliana</name>
    <name type="common">Mouse-ear cress</name>
    <dbReference type="NCBI Taxonomy" id="3702"/>
    <lineage>
        <taxon>Eukaryota</taxon>
        <taxon>Viridiplantae</taxon>
        <taxon>Streptophyta</taxon>
        <taxon>Embryophyta</taxon>
        <taxon>Tracheophyta</taxon>
        <taxon>Spermatophyta</taxon>
        <taxon>Magnoliopsida</taxon>
        <taxon>eudicotyledons</taxon>
        <taxon>Gunneridae</taxon>
        <taxon>Pentapetalae</taxon>
        <taxon>rosids</taxon>
        <taxon>malvids</taxon>
        <taxon>Brassicales</taxon>
        <taxon>Brassicaceae</taxon>
        <taxon>Camelineae</taxon>
        <taxon>Arabidopsis</taxon>
    </lineage>
</organism>
<accession>Q93ZF5</accession>
<accession>Q6R8G9</accession>
<accession>Q9CA38</accession>
<accession>Q9SX34</accession>
<protein>
    <recommendedName>
        <fullName>Phosphate transporter PHO1 homolog 1</fullName>
    </recommendedName>
    <alternativeName>
        <fullName>Protein PHO1 homolog 1</fullName>
        <shortName>AtPHO1;H1</shortName>
    </alternativeName>
</protein>
<comment type="function">
    <text evidence="5">Contributes to the loading of inorganic phosphate (Pi) into the root xylem vessels.</text>
</comment>
<comment type="subcellular location">
    <subcellularLocation>
        <location evidence="7">Cell membrane</location>
        <topology evidence="7">Multi-pass membrane protein</topology>
    </subcellularLocation>
</comment>
<comment type="tissue specificity">
    <text evidence="4 5">Expressed in vascular cylinder of roots, leaves, stems, petals, sepals and filaments. Expressed in receptacle, stigma apex and anther connective tissue.</text>
</comment>
<comment type="induction">
    <text evidence="4 5 6">By Pi deficiency in roots and shoots. Induced by sucrose, auxin and cytokinin. Down-regulated by abscisic acid (ABA).</text>
</comment>
<comment type="disruption phenotype">
    <text evidence="5">No visible phenotype.</text>
</comment>
<comment type="similarity">
    <text evidence="7">Belongs to the SYG1 (TC 2.A.94) family.</text>
</comment>
<comment type="sequence caution" evidence="7">
    <conflict type="erroneous gene model prediction">
        <sequence resource="EMBL-CDS" id="AAD49969"/>
    </conflict>
</comment>
<comment type="sequence caution" evidence="7">
    <conflict type="erroneous gene model prediction">
        <sequence resource="EMBL-CDS" id="AAG52042"/>
    </conflict>
</comment>
<feature type="chain" id="PRO_0000398155" description="Phosphate transporter PHO1 homolog 1">
    <location>
        <begin position="1"/>
        <end position="784"/>
    </location>
</feature>
<feature type="topological domain" description="Cytoplasmic" evidence="1">
    <location>
        <begin position="1"/>
        <end position="387"/>
    </location>
</feature>
<feature type="transmembrane region" description="Helical" evidence="1">
    <location>
        <begin position="388"/>
        <end position="408"/>
    </location>
</feature>
<feature type="topological domain" description="Extracellular" evidence="1">
    <location>
        <begin position="409"/>
        <end position="429"/>
    </location>
</feature>
<feature type="transmembrane region" description="Helical" evidence="1">
    <location>
        <begin position="430"/>
        <end position="450"/>
    </location>
</feature>
<feature type="topological domain" description="Cytoplasmic" evidence="1">
    <location>
        <begin position="451"/>
        <end position="474"/>
    </location>
</feature>
<feature type="transmembrane region" description="Helical" evidence="1">
    <location>
        <begin position="475"/>
        <end position="495"/>
    </location>
</feature>
<feature type="topological domain" description="Extracellular" evidence="1">
    <location>
        <begin position="496"/>
        <end position="507"/>
    </location>
</feature>
<feature type="transmembrane region" description="Helical" evidence="1">
    <location>
        <begin position="508"/>
        <end position="528"/>
    </location>
</feature>
<feature type="topological domain" description="Cytoplasmic" evidence="1">
    <location>
        <begin position="529"/>
        <end position="654"/>
    </location>
</feature>
<feature type="transmembrane region" description="Helical" evidence="1">
    <location>
        <begin position="655"/>
        <end position="675"/>
    </location>
</feature>
<feature type="topological domain" description="Extracellular" evidence="1">
    <location>
        <begin position="676"/>
        <end position="703"/>
    </location>
</feature>
<feature type="transmembrane region" description="Helical" evidence="1">
    <location>
        <begin position="704"/>
        <end position="724"/>
    </location>
</feature>
<feature type="topological domain" description="Cytoplasmic" evidence="1">
    <location>
        <begin position="725"/>
        <end position="784"/>
    </location>
</feature>
<feature type="domain" description="SPX" evidence="3">
    <location>
        <begin position="2"/>
        <end position="335"/>
    </location>
</feature>
<feature type="domain" description="EXS" evidence="2">
    <location>
        <begin position="593"/>
        <end position="784"/>
    </location>
</feature>
<feature type="sequence conflict" description="In Ref. 1; AAR99483." evidence="7" ref="1">
    <original>F</original>
    <variation>S</variation>
    <location>
        <position position="20"/>
    </location>
</feature>
<evidence type="ECO:0000255" key="1"/>
<evidence type="ECO:0000255" key="2">
    <source>
        <dbReference type="PROSITE-ProRule" id="PRU00712"/>
    </source>
</evidence>
<evidence type="ECO:0000255" key="3">
    <source>
        <dbReference type="PROSITE-ProRule" id="PRU00714"/>
    </source>
</evidence>
<evidence type="ECO:0000269" key="4">
    <source>
    </source>
</evidence>
<evidence type="ECO:0000269" key="5">
    <source>
    </source>
</evidence>
<evidence type="ECO:0000269" key="6">
    <source>
    </source>
</evidence>
<evidence type="ECO:0000305" key="7"/>
<proteinExistence type="evidence at protein level"/>
<reference key="1">
    <citation type="journal article" date="2004" name="Plant Physiol.">
        <title>Structure and expression profile of the Arabidopsis PHO1 gene family indicates a broad role in inorganic phosphate homeostasis.</title>
        <authorList>
            <person name="Wang Y."/>
            <person name="Ribot C."/>
            <person name="Rezzonico E."/>
            <person name="Poirier Y."/>
        </authorList>
    </citation>
    <scope>NUCLEOTIDE SEQUENCE [MRNA]</scope>
    <scope>TISSUE SPECIFICITY</scope>
    <scope>INDUCTION</scope>
    <scope>GENE FAMILY</scope>
    <scope>NOMENCLATURE</scope>
</reference>
<reference key="2">
    <citation type="journal article" date="2000" name="Nature">
        <title>Sequence and analysis of chromosome 1 of the plant Arabidopsis thaliana.</title>
        <authorList>
            <person name="Theologis A."/>
            <person name="Ecker J.R."/>
            <person name="Palm C.J."/>
            <person name="Federspiel N.A."/>
            <person name="Kaul S."/>
            <person name="White O."/>
            <person name="Alonso J."/>
            <person name="Altafi H."/>
            <person name="Araujo R."/>
            <person name="Bowman C.L."/>
            <person name="Brooks S.Y."/>
            <person name="Buehler E."/>
            <person name="Chan A."/>
            <person name="Chao Q."/>
            <person name="Chen H."/>
            <person name="Cheuk R.F."/>
            <person name="Chin C.W."/>
            <person name="Chung M.K."/>
            <person name="Conn L."/>
            <person name="Conway A.B."/>
            <person name="Conway A.R."/>
            <person name="Creasy T.H."/>
            <person name="Dewar K."/>
            <person name="Dunn P."/>
            <person name="Etgu P."/>
            <person name="Feldblyum T.V."/>
            <person name="Feng J.-D."/>
            <person name="Fong B."/>
            <person name="Fujii C.Y."/>
            <person name="Gill J.E."/>
            <person name="Goldsmith A.D."/>
            <person name="Haas B."/>
            <person name="Hansen N.F."/>
            <person name="Hughes B."/>
            <person name="Huizar L."/>
            <person name="Hunter J.L."/>
            <person name="Jenkins J."/>
            <person name="Johnson-Hopson C."/>
            <person name="Khan S."/>
            <person name="Khaykin E."/>
            <person name="Kim C.J."/>
            <person name="Koo H.L."/>
            <person name="Kremenetskaia I."/>
            <person name="Kurtz D.B."/>
            <person name="Kwan A."/>
            <person name="Lam B."/>
            <person name="Langin-Hooper S."/>
            <person name="Lee A."/>
            <person name="Lee J.M."/>
            <person name="Lenz C.A."/>
            <person name="Li J.H."/>
            <person name="Li Y.-P."/>
            <person name="Lin X."/>
            <person name="Liu S.X."/>
            <person name="Liu Z.A."/>
            <person name="Luros J.S."/>
            <person name="Maiti R."/>
            <person name="Marziali A."/>
            <person name="Militscher J."/>
            <person name="Miranda M."/>
            <person name="Nguyen M."/>
            <person name="Nierman W.C."/>
            <person name="Osborne B.I."/>
            <person name="Pai G."/>
            <person name="Peterson J."/>
            <person name="Pham P.K."/>
            <person name="Rizzo M."/>
            <person name="Rooney T."/>
            <person name="Rowley D."/>
            <person name="Sakano H."/>
            <person name="Salzberg S.L."/>
            <person name="Schwartz J.R."/>
            <person name="Shinn P."/>
            <person name="Southwick A.M."/>
            <person name="Sun H."/>
            <person name="Tallon L.J."/>
            <person name="Tambunga G."/>
            <person name="Toriumi M.J."/>
            <person name="Town C.D."/>
            <person name="Utterback T."/>
            <person name="Van Aken S."/>
            <person name="Vaysberg M."/>
            <person name="Vysotskaia V.S."/>
            <person name="Walker M."/>
            <person name="Wu D."/>
            <person name="Yu G."/>
            <person name="Fraser C.M."/>
            <person name="Venter J.C."/>
            <person name="Davis R.W."/>
        </authorList>
    </citation>
    <scope>NUCLEOTIDE SEQUENCE [LARGE SCALE GENOMIC DNA]</scope>
    <source>
        <strain>cv. Columbia</strain>
    </source>
</reference>
<reference key="3">
    <citation type="journal article" date="2017" name="Plant J.">
        <title>Araport11: a complete reannotation of the Arabidopsis thaliana reference genome.</title>
        <authorList>
            <person name="Cheng C.Y."/>
            <person name="Krishnakumar V."/>
            <person name="Chan A.P."/>
            <person name="Thibaud-Nissen F."/>
            <person name="Schobel S."/>
            <person name="Town C.D."/>
        </authorList>
    </citation>
    <scope>GENOME REANNOTATION</scope>
    <source>
        <strain>cv. Columbia</strain>
    </source>
</reference>
<reference key="4">
    <citation type="journal article" date="2003" name="Science">
        <title>Empirical analysis of transcriptional activity in the Arabidopsis genome.</title>
        <authorList>
            <person name="Yamada K."/>
            <person name="Lim J."/>
            <person name="Dale J.M."/>
            <person name="Chen H."/>
            <person name="Shinn P."/>
            <person name="Palm C.J."/>
            <person name="Southwick A.M."/>
            <person name="Wu H.C."/>
            <person name="Kim C.J."/>
            <person name="Nguyen M."/>
            <person name="Pham P.K."/>
            <person name="Cheuk R.F."/>
            <person name="Karlin-Newmann G."/>
            <person name="Liu S.X."/>
            <person name="Lam B."/>
            <person name="Sakano H."/>
            <person name="Wu T."/>
            <person name="Yu G."/>
            <person name="Miranda M."/>
            <person name="Quach H.L."/>
            <person name="Tripp M."/>
            <person name="Chang C.H."/>
            <person name="Lee J.M."/>
            <person name="Toriumi M.J."/>
            <person name="Chan M.M."/>
            <person name="Tang C.C."/>
            <person name="Onodera C.S."/>
            <person name="Deng J.M."/>
            <person name="Akiyama K."/>
            <person name="Ansari Y."/>
            <person name="Arakawa T."/>
            <person name="Banh J."/>
            <person name="Banno F."/>
            <person name="Bowser L."/>
            <person name="Brooks S.Y."/>
            <person name="Carninci P."/>
            <person name="Chao Q."/>
            <person name="Choy N."/>
            <person name="Enju A."/>
            <person name="Goldsmith A.D."/>
            <person name="Gurjal M."/>
            <person name="Hansen N.F."/>
            <person name="Hayashizaki Y."/>
            <person name="Johnson-Hopson C."/>
            <person name="Hsuan V.W."/>
            <person name="Iida K."/>
            <person name="Karnes M."/>
            <person name="Khan S."/>
            <person name="Koesema E."/>
            <person name="Ishida J."/>
            <person name="Jiang P.X."/>
            <person name="Jones T."/>
            <person name="Kawai J."/>
            <person name="Kamiya A."/>
            <person name="Meyers C."/>
            <person name="Nakajima M."/>
            <person name="Narusaka M."/>
            <person name="Seki M."/>
            <person name="Sakurai T."/>
            <person name="Satou M."/>
            <person name="Tamse R."/>
            <person name="Vaysberg M."/>
            <person name="Wallender E.K."/>
            <person name="Wong C."/>
            <person name="Yamamura Y."/>
            <person name="Yuan S."/>
            <person name="Shinozaki K."/>
            <person name="Davis R.W."/>
            <person name="Theologis A."/>
            <person name="Ecker J.R."/>
        </authorList>
    </citation>
    <scope>NUCLEOTIDE SEQUENCE [LARGE SCALE MRNA]</scope>
    <source>
        <strain>cv. Columbia</strain>
    </source>
</reference>
<reference key="5">
    <citation type="journal article" date="2007" name="Plant J.">
        <title>Members of the PHO1 gene family show limited functional redundancy in phosphate transfer to the shoot, and are regulated by phosphate deficiency via distinct pathways.</title>
        <authorList>
            <person name="Stefanovic A."/>
            <person name="Ribot C."/>
            <person name="Rouached H."/>
            <person name="Wang Y."/>
            <person name="Chong J."/>
            <person name="Belbahri L."/>
            <person name="Delessert S."/>
            <person name="Poirier Y."/>
        </authorList>
    </citation>
    <scope>FUNCTION</scope>
    <scope>TISSUE SPECIFICITY</scope>
    <scope>INDUCTION</scope>
    <scope>DISRUPTION PHENOTYPE</scope>
</reference>
<reference key="6">
    <citation type="journal article" date="2008" name="Planta">
        <title>Expression analyses of three members of the AtPHO1 family reveal differential interactions between signaling pathways involved in phosphate deficiency and the responses to auxin, cytokinin, and abscisic acid.</title>
        <authorList>
            <person name="Ribot C."/>
            <person name="Wang Y."/>
            <person name="Poirier Y."/>
        </authorList>
    </citation>
    <scope>INDUCTION</scope>
</reference>
<keyword id="KW-0002">3D-structure</keyword>
<keyword id="KW-1003">Cell membrane</keyword>
<keyword id="KW-0472">Membrane</keyword>
<keyword id="KW-0592">Phosphate transport</keyword>
<keyword id="KW-1185">Reference proteome</keyword>
<keyword id="KW-0812">Transmembrane</keyword>
<keyword id="KW-1133">Transmembrane helix</keyword>
<keyword id="KW-0813">Transport</keyword>
<dbReference type="EMBL" id="AY507953">
    <property type="protein sequence ID" value="AAR99483.1"/>
    <property type="molecule type" value="mRNA"/>
</dbReference>
<dbReference type="EMBL" id="AC008075">
    <property type="protein sequence ID" value="AAD49969.1"/>
    <property type="status" value="ALT_SEQ"/>
    <property type="molecule type" value="Genomic_DNA"/>
</dbReference>
<dbReference type="EMBL" id="AC011914">
    <property type="protein sequence ID" value="AAG52042.1"/>
    <property type="status" value="ALT_SEQ"/>
    <property type="molecule type" value="Genomic_DNA"/>
</dbReference>
<dbReference type="EMBL" id="CP002684">
    <property type="protein sequence ID" value="AEE34834.1"/>
    <property type="molecule type" value="Genomic_DNA"/>
</dbReference>
<dbReference type="EMBL" id="AY057574">
    <property type="protein sequence ID" value="AAL09813.1"/>
    <property type="molecule type" value="mRNA"/>
</dbReference>
<dbReference type="PIR" id="B96712">
    <property type="entry name" value="B96712"/>
</dbReference>
<dbReference type="RefSeq" id="NP_564940.1">
    <property type="nucleotide sequence ID" value="NM_105547.3"/>
</dbReference>
<dbReference type="PDB" id="9IK4">
    <property type="method" value="EM"/>
    <property type="resolution" value="3.34 A"/>
    <property type="chains" value="A/B=1-772"/>
</dbReference>
<dbReference type="PDB" id="9JF8">
    <property type="method" value="EM"/>
    <property type="resolution" value="3.05 A"/>
    <property type="chains" value="A=1-784"/>
</dbReference>
<dbReference type="PDBsum" id="9IK4"/>
<dbReference type="PDBsum" id="9JF8"/>
<dbReference type="EMDB" id="EMD-60648"/>
<dbReference type="EMDB" id="EMD-61430"/>
<dbReference type="SMR" id="Q93ZF5"/>
<dbReference type="FunCoup" id="Q93ZF5">
    <property type="interactions" value="2827"/>
</dbReference>
<dbReference type="STRING" id="3702.Q93ZF5"/>
<dbReference type="iPTMnet" id="Q93ZF5"/>
<dbReference type="PaxDb" id="3702-AT1G68740.1"/>
<dbReference type="EnsemblPlants" id="AT1G68740.1">
    <property type="protein sequence ID" value="AT1G68740.1"/>
    <property type="gene ID" value="AT1G68740"/>
</dbReference>
<dbReference type="GeneID" id="843205"/>
<dbReference type="Gramene" id="AT1G68740.1">
    <property type="protein sequence ID" value="AT1G68740.1"/>
    <property type="gene ID" value="AT1G68740"/>
</dbReference>
<dbReference type="KEGG" id="ath:AT1G68740"/>
<dbReference type="Araport" id="AT1G68740"/>
<dbReference type="TAIR" id="AT1G68740">
    <property type="gene designation" value="PHO1"/>
</dbReference>
<dbReference type="eggNOG" id="KOG1162">
    <property type="taxonomic scope" value="Eukaryota"/>
</dbReference>
<dbReference type="HOGENOM" id="CLU_006116_2_0_1"/>
<dbReference type="InParanoid" id="Q93ZF5"/>
<dbReference type="OMA" id="KFRAVKM"/>
<dbReference type="PhylomeDB" id="Q93ZF5"/>
<dbReference type="PRO" id="PR:Q93ZF5"/>
<dbReference type="Proteomes" id="UP000006548">
    <property type="component" value="Chromosome 1"/>
</dbReference>
<dbReference type="ExpressionAtlas" id="Q93ZF5">
    <property type="expression patterns" value="baseline and differential"/>
</dbReference>
<dbReference type="GO" id="GO:0005886">
    <property type="term" value="C:plasma membrane"/>
    <property type="evidence" value="ECO:0007669"/>
    <property type="project" value="UniProtKB-SubCell"/>
</dbReference>
<dbReference type="GO" id="GO:0016036">
    <property type="term" value="P:cellular response to phosphate starvation"/>
    <property type="evidence" value="ECO:0000270"/>
    <property type="project" value="TAIR"/>
</dbReference>
<dbReference type="GO" id="GO:0006817">
    <property type="term" value="P:phosphate ion transport"/>
    <property type="evidence" value="ECO:0000315"/>
    <property type="project" value="TAIR"/>
</dbReference>
<dbReference type="CDD" id="cd14476">
    <property type="entry name" value="SPX_PHO1_like"/>
    <property type="match status" value="1"/>
</dbReference>
<dbReference type="InterPro" id="IPR004342">
    <property type="entry name" value="EXS_C"/>
</dbReference>
<dbReference type="InterPro" id="IPR052486">
    <property type="entry name" value="PHO1"/>
</dbReference>
<dbReference type="InterPro" id="IPR034092">
    <property type="entry name" value="PHO1_SPX"/>
</dbReference>
<dbReference type="InterPro" id="IPR004331">
    <property type="entry name" value="SPX_dom"/>
</dbReference>
<dbReference type="PANTHER" id="PTHR48477">
    <property type="entry name" value="PHOSPHATE TRANSPORTER PHO1"/>
    <property type="match status" value="1"/>
</dbReference>
<dbReference type="PANTHER" id="PTHR48477:SF1">
    <property type="entry name" value="PHOSPHATE TRANSPORTER PHO1"/>
    <property type="match status" value="1"/>
</dbReference>
<dbReference type="Pfam" id="PF03124">
    <property type="entry name" value="EXS"/>
    <property type="match status" value="1"/>
</dbReference>
<dbReference type="Pfam" id="PF03105">
    <property type="entry name" value="SPX"/>
    <property type="match status" value="1"/>
</dbReference>
<dbReference type="PROSITE" id="PS51380">
    <property type="entry name" value="EXS"/>
    <property type="match status" value="1"/>
</dbReference>
<dbReference type="PROSITE" id="PS51382">
    <property type="entry name" value="SPX"/>
    <property type="match status" value="1"/>
</dbReference>
<gene>
    <name type="primary">PHO1-H1</name>
    <name type="ordered locus">At1g68740</name>
    <name type="ORF">F14K14.15</name>
    <name type="ORF">F24J5.2</name>
</gene>
<sequence length="784" mass="90711">MVKFTKQFEGQLVPEWKDAFVDYSQLKKDLKKIHLFTNGVEKKHTETSLIKTVKSSLGRLSIFGNKGREQSRVIQVHKKLASSGSNNDVYETELLEKIADDTDAAKEFFACLDMQLNKVNQFYKTKEKEFLERGECLKKQMDILIELKDAFKQKQANGESTQESKEDDSISCTISCEYDSVRGRTEEMQLQVSCLDNLEDNGEEALESLGSEEPIKANNEDSKLTTVSSRVFSCQGKNVKIKIPLTNPSRTFSAISYLINQSSSKKNGPDGGNKLQISKKKLSHAEKMIKGALTELFKGLNYLKTYRNLNILAFMNILKKFDKVTGKQILPIYLKVVESSYFNISDKVMILSDEVEEWFIKHLAGENRRKAMKYLKPHHRKESHSVTFFIGLFTGCFVALLAGYIIVAHLTGMYRQHSANTFYMETAYPVLSMFGLLFLHLFLYGCNIFMWRKARINYSFIFELGSKNELKYRDVFLICTASMSAIAGVMFVHLSLLEKGYSFRQVQVIPGLLLLGFLLILICPLNIFYKSSRYRLISVIRNIVFSPLYKVVMLDFFMADQLCSQVPMLRNLEYIACYYITGSYATQDYEYCMRVKYYRDLAYAVSFLPYYWRAMQCARRWFDEGETSHLVNLGKYVSAMLAAGTKVAYEKERSLGWLCLVVAMSSVATIYQLYWDFVKDWGLLQHNSNNPWLRNQLMLRQKSIYYFSMVLNLVLRLAWLQTVLHSSFEHVDYRVTGLFLAALEVIRRGQWNFYRLENEHLNNAGKFRAVKTVPLPFREVDEED</sequence>